<reference key="1">
    <citation type="journal article" date="2006" name="Genome Res.">
        <title>Massive genome erosion and functional adaptations provide insights into the symbiotic lifestyle of Sodalis glossinidius in the tsetse host.</title>
        <authorList>
            <person name="Toh H."/>
            <person name="Weiss B.L."/>
            <person name="Perkin S.A.H."/>
            <person name="Yamashita A."/>
            <person name="Oshima K."/>
            <person name="Hattori M."/>
            <person name="Aksoy S."/>
        </authorList>
    </citation>
    <scope>NUCLEOTIDE SEQUENCE [LARGE SCALE GENOMIC DNA]</scope>
    <source>
        <strain>morsitans</strain>
    </source>
</reference>
<organism>
    <name type="scientific">Sodalis glossinidius (strain morsitans)</name>
    <dbReference type="NCBI Taxonomy" id="343509"/>
    <lineage>
        <taxon>Bacteria</taxon>
        <taxon>Pseudomonadati</taxon>
        <taxon>Pseudomonadota</taxon>
        <taxon>Gammaproteobacteria</taxon>
        <taxon>Enterobacterales</taxon>
        <taxon>Bruguierivoracaceae</taxon>
        <taxon>Sodalis</taxon>
    </lineage>
</organism>
<name>LPXC_SODGM</name>
<comment type="function">
    <text evidence="1">Catalyzes the hydrolysis of UDP-3-O-myristoyl-N-acetylglucosamine to form UDP-3-O-myristoylglucosamine and acetate, the committed step in lipid A biosynthesis.</text>
</comment>
<comment type="catalytic activity">
    <reaction evidence="1">
        <text>a UDP-3-O-[(3R)-3-hydroxyacyl]-N-acetyl-alpha-D-glucosamine + H2O = a UDP-3-O-[(3R)-3-hydroxyacyl]-alpha-D-glucosamine + acetate</text>
        <dbReference type="Rhea" id="RHEA:67816"/>
        <dbReference type="ChEBI" id="CHEBI:15377"/>
        <dbReference type="ChEBI" id="CHEBI:30089"/>
        <dbReference type="ChEBI" id="CHEBI:137740"/>
        <dbReference type="ChEBI" id="CHEBI:173225"/>
        <dbReference type="EC" id="3.5.1.108"/>
    </reaction>
</comment>
<comment type="cofactor">
    <cofactor evidence="1">
        <name>Zn(2+)</name>
        <dbReference type="ChEBI" id="CHEBI:29105"/>
    </cofactor>
</comment>
<comment type="pathway">
    <text evidence="1">Glycolipid biosynthesis; lipid IV(A) biosynthesis; lipid IV(A) from (3R)-3-hydroxytetradecanoyl-[acyl-carrier-protein] and UDP-N-acetyl-alpha-D-glucosamine: step 2/6.</text>
</comment>
<comment type="similarity">
    <text evidence="1">Belongs to the LpxC family.</text>
</comment>
<accession>Q2NVU6</accession>
<proteinExistence type="inferred from homology"/>
<gene>
    <name evidence="1" type="primary">lpxC</name>
    <name type="ordered locus">SG0454</name>
</gene>
<sequence length="305" mass="34022">MIKQRTLKRIVQATGVGLHTGKKVTLTLRPASANTGVIYRRTDLNPPVDFPADAKSVRDTMLCTCLVNEHDVRISTVEHLNAALAGLGIDNIIVEVDAPEIPIMDGSASPFVYLLLDAGIEELNSAKKFLRLKQAVRVEDGDKWAELAPYNGFTLDFTIDFKHPAIDASSQRYFLNFSAESFVRQISRARTFGFMRDIEYLQSRGLALGGSFDCAIVVDDYRVLNEDGLRFEDEFVRHKMLDAIGDLFMFGHNIIGAFTAFKSGHAMNNKLLQAVLARQEAWELVTFEDEAKLPLAFKAPSFVMV</sequence>
<keyword id="KW-0378">Hydrolase</keyword>
<keyword id="KW-0441">Lipid A biosynthesis</keyword>
<keyword id="KW-0444">Lipid biosynthesis</keyword>
<keyword id="KW-0443">Lipid metabolism</keyword>
<keyword id="KW-0479">Metal-binding</keyword>
<keyword id="KW-0862">Zinc</keyword>
<dbReference type="EC" id="3.5.1.108" evidence="1"/>
<dbReference type="EMBL" id="AP008232">
    <property type="protein sequence ID" value="BAE73729.1"/>
    <property type="molecule type" value="Genomic_DNA"/>
</dbReference>
<dbReference type="RefSeq" id="WP_011410427.1">
    <property type="nucleotide sequence ID" value="NC_007712.1"/>
</dbReference>
<dbReference type="SMR" id="Q2NVU6"/>
<dbReference type="STRING" id="343509.SG0454"/>
<dbReference type="KEGG" id="sgl:SG0454"/>
<dbReference type="eggNOG" id="COG0774">
    <property type="taxonomic scope" value="Bacteria"/>
</dbReference>
<dbReference type="HOGENOM" id="CLU_046528_1_0_6"/>
<dbReference type="OrthoDB" id="9802746at2"/>
<dbReference type="BioCyc" id="SGLO343509:SGP1_RS04040-MONOMER"/>
<dbReference type="UniPathway" id="UPA00359">
    <property type="reaction ID" value="UER00478"/>
</dbReference>
<dbReference type="Proteomes" id="UP000001932">
    <property type="component" value="Chromosome"/>
</dbReference>
<dbReference type="GO" id="GO:0016020">
    <property type="term" value="C:membrane"/>
    <property type="evidence" value="ECO:0007669"/>
    <property type="project" value="GOC"/>
</dbReference>
<dbReference type="GO" id="GO:0046872">
    <property type="term" value="F:metal ion binding"/>
    <property type="evidence" value="ECO:0007669"/>
    <property type="project" value="UniProtKB-KW"/>
</dbReference>
<dbReference type="GO" id="GO:0103117">
    <property type="term" value="F:UDP-3-O-acyl-N-acetylglucosamine deacetylase activity"/>
    <property type="evidence" value="ECO:0007669"/>
    <property type="project" value="UniProtKB-UniRule"/>
</dbReference>
<dbReference type="GO" id="GO:0009245">
    <property type="term" value="P:lipid A biosynthetic process"/>
    <property type="evidence" value="ECO:0007669"/>
    <property type="project" value="UniProtKB-UniRule"/>
</dbReference>
<dbReference type="FunFam" id="3.30.1700.10:FF:000001">
    <property type="entry name" value="UDP-3-O-acyl-N-acetylglucosamine deacetylase"/>
    <property type="match status" value="1"/>
</dbReference>
<dbReference type="FunFam" id="3.30.230.20:FF:000001">
    <property type="entry name" value="UDP-3-O-acyl-N-acetylglucosamine deacetylase"/>
    <property type="match status" value="1"/>
</dbReference>
<dbReference type="Gene3D" id="3.30.230.20">
    <property type="entry name" value="lpxc deacetylase, domain 1"/>
    <property type="match status" value="1"/>
</dbReference>
<dbReference type="Gene3D" id="3.30.1700.10">
    <property type="entry name" value="lpxc deacetylase, domain 2"/>
    <property type="match status" value="1"/>
</dbReference>
<dbReference type="HAMAP" id="MF_00388">
    <property type="entry name" value="LpxC"/>
    <property type="match status" value="1"/>
</dbReference>
<dbReference type="InterPro" id="IPR020568">
    <property type="entry name" value="Ribosomal_Su5_D2-typ_SF"/>
</dbReference>
<dbReference type="InterPro" id="IPR004463">
    <property type="entry name" value="UDP-acyl_GlcNac_deAcase"/>
</dbReference>
<dbReference type="InterPro" id="IPR011334">
    <property type="entry name" value="UDP-acyl_GlcNac_deAcase_C"/>
</dbReference>
<dbReference type="InterPro" id="IPR015870">
    <property type="entry name" value="UDP-acyl_N-AcGlcN_deAcase_N"/>
</dbReference>
<dbReference type="NCBIfam" id="TIGR00325">
    <property type="entry name" value="lpxC"/>
    <property type="match status" value="1"/>
</dbReference>
<dbReference type="PANTHER" id="PTHR33694">
    <property type="entry name" value="UDP-3-O-ACYL-N-ACETYLGLUCOSAMINE DEACETYLASE 1, MITOCHONDRIAL-RELATED"/>
    <property type="match status" value="1"/>
</dbReference>
<dbReference type="PANTHER" id="PTHR33694:SF1">
    <property type="entry name" value="UDP-3-O-ACYL-N-ACETYLGLUCOSAMINE DEACETYLASE 1, MITOCHONDRIAL-RELATED"/>
    <property type="match status" value="1"/>
</dbReference>
<dbReference type="Pfam" id="PF03331">
    <property type="entry name" value="LpxC"/>
    <property type="match status" value="1"/>
</dbReference>
<dbReference type="SUPFAM" id="SSF54211">
    <property type="entry name" value="Ribosomal protein S5 domain 2-like"/>
    <property type="match status" value="2"/>
</dbReference>
<protein>
    <recommendedName>
        <fullName evidence="1">UDP-3-O-acyl-N-acetylglucosamine deacetylase</fullName>
        <shortName evidence="1">UDP-3-O-acyl-GlcNAc deacetylase</shortName>
        <ecNumber evidence="1">3.5.1.108</ecNumber>
    </recommendedName>
    <alternativeName>
        <fullName evidence="1">UDP-3-O-[R-3-hydroxymyristoyl]-N-acetylglucosamine deacetylase</fullName>
    </alternativeName>
</protein>
<evidence type="ECO:0000255" key="1">
    <source>
        <dbReference type="HAMAP-Rule" id="MF_00388"/>
    </source>
</evidence>
<feature type="chain" id="PRO_0000253697" description="UDP-3-O-acyl-N-acetylglucosamine deacetylase">
    <location>
        <begin position="1"/>
        <end position="305"/>
    </location>
</feature>
<feature type="active site" description="Proton donor" evidence="1">
    <location>
        <position position="265"/>
    </location>
</feature>
<feature type="binding site" evidence="1">
    <location>
        <position position="79"/>
    </location>
    <ligand>
        <name>Zn(2+)</name>
        <dbReference type="ChEBI" id="CHEBI:29105"/>
    </ligand>
</feature>
<feature type="binding site" evidence="1">
    <location>
        <position position="238"/>
    </location>
    <ligand>
        <name>Zn(2+)</name>
        <dbReference type="ChEBI" id="CHEBI:29105"/>
    </ligand>
</feature>
<feature type="binding site" evidence="1">
    <location>
        <position position="242"/>
    </location>
    <ligand>
        <name>Zn(2+)</name>
        <dbReference type="ChEBI" id="CHEBI:29105"/>
    </ligand>
</feature>